<proteinExistence type="inferred from homology"/>
<gene>
    <name evidence="1" type="primary">rplQ</name>
    <name type="ordered locus">Pnap_0346</name>
</gene>
<accession>A1VJ41</accession>
<name>RL17_POLNA</name>
<feature type="chain" id="PRO_1000055905" description="Large ribosomal subunit protein bL17">
    <location>
        <begin position="1"/>
        <end position="133"/>
    </location>
</feature>
<comment type="subunit">
    <text evidence="1">Part of the 50S ribosomal subunit. Contacts protein L32.</text>
</comment>
<comment type="similarity">
    <text evidence="1">Belongs to the bacterial ribosomal protein bL17 family.</text>
</comment>
<organism>
    <name type="scientific">Polaromonas naphthalenivorans (strain CJ2)</name>
    <dbReference type="NCBI Taxonomy" id="365044"/>
    <lineage>
        <taxon>Bacteria</taxon>
        <taxon>Pseudomonadati</taxon>
        <taxon>Pseudomonadota</taxon>
        <taxon>Betaproteobacteria</taxon>
        <taxon>Burkholderiales</taxon>
        <taxon>Comamonadaceae</taxon>
        <taxon>Polaromonas</taxon>
    </lineage>
</organism>
<evidence type="ECO:0000255" key="1">
    <source>
        <dbReference type="HAMAP-Rule" id="MF_01368"/>
    </source>
</evidence>
<evidence type="ECO:0000305" key="2"/>
<protein>
    <recommendedName>
        <fullName evidence="1">Large ribosomal subunit protein bL17</fullName>
    </recommendedName>
    <alternativeName>
        <fullName evidence="2">50S ribosomal protein L17</fullName>
    </alternativeName>
</protein>
<dbReference type="EMBL" id="CP000529">
    <property type="protein sequence ID" value="ABM35669.1"/>
    <property type="molecule type" value="Genomic_DNA"/>
</dbReference>
<dbReference type="RefSeq" id="WP_011799774.1">
    <property type="nucleotide sequence ID" value="NC_008781.1"/>
</dbReference>
<dbReference type="SMR" id="A1VJ41"/>
<dbReference type="STRING" id="365044.Pnap_0346"/>
<dbReference type="KEGG" id="pna:Pnap_0346"/>
<dbReference type="eggNOG" id="COG0203">
    <property type="taxonomic scope" value="Bacteria"/>
</dbReference>
<dbReference type="HOGENOM" id="CLU_074407_2_0_4"/>
<dbReference type="OrthoDB" id="9809073at2"/>
<dbReference type="Proteomes" id="UP000000644">
    <property type="component" value="Chromosome"/>
</dbReference>
<dbReference type="GO" id="GO:0022625">
    <property type="term" value="C:cytosolic large ribosomal subunit"/>
    <property type="evidence" value="ECO:0007669"/>
    <property type="project" value="TreeGrafter"/>
</dbReference>
<dbReference type="GO" id="GO:0003735">
    <property type="term" value="F:structural constituent of ribosome"/>
    <property type="evidence" value="ECO:0007669"/>
    <property type="project" value="InterPro"/>
</dbReference>
<dbReference type="GO" id="GO:0006412">
    <property type="term" value="P:translation"/>
    <property type="evidence" value="ECO:0007669"/>
    <property type="project" value="UniProtKB-UniRule"/>
</dbReference>
<dbReference type="FunFam" id="3.90.1030.10:FF:000001">
    <property type="entry name" value="50S ribosomal protein L17"/>
    <property type="match status" value="1"/>
</dbReference>
<dbReference type="Gene3D" id="3.90.1030.10">
    <property type="entry name" value="Ribosomal protein L17"/>
    <property type="match status" value="1"/>
</dbReference>
<dbReference type="HAMAP" id="MF_01368">
    <property type="entry name" value="Ribosomal_bL17"/>
    <property type="match status" value="1"/>
</dbReference>
<dbReference type="InterPro" id="IPR000456">
    <property type="entry name" value="Ribosomal_bL17"/>
</dbReference>
<dbReference type="InterPro" id="IPR047859">
    <property type="entry name" value="Ribosomal_bL17_CS"/>
</dbReference>
<dbReference type="InterPro" id="IPR036373">
    <property type="entry name" value="Ribosomal_bL17_sf"/>
</dbReference>
<dbReference type="NCBIfam" id="TIGR00059">
    <property type="entry name" value="L17"/>
    <property type="match status" value="1"/>
</dbReference>
<dbReference type="PANTHER" id="PTHR14413:SF16">
    <property type="entry name" value="LARGE RIBOSOMAL SUBUNIT PROTEIN BL17M"/>
    <property type="match status" value="1"/>
</dbReference>
<dbReference type="PANTHER" id="PTHR14413">
    <property type="entry name" value="RIBOSOMAL PROTEIN L17"/>
    <property type="match status" value="1"/>
</dbReference>
<dbReference type="Pfam" id="PF01196">
    <property type="entry name" value="Ribosomal_L17"/>
    <property type="match status" value="1"/>
</dbReference>
<dbReference type="SUPFAM" id="SSF64263">
    <property type="entry name" value="Prokaryotic ribosomal protein L17"/>
    <property type="match status" value="1"/>
</dbReference>
<dbReference type="PROSITE" id="PS01167">
    <property type="entry name" value="RIBOSOMAL_L17"/>
    <property type="match status" value="1"/>
</dbReference>
<reference key="1">
    <citation type="journal article" date="2009" name="Environ. Microbiol.">
        <title>The genome of Polaromonas naphthalenivorans strain CJ2, isolated from coal tar-contaminated sediment, reveals physiological and metabolic versatility and evolution through extensive horizontal gene transfer.</title>
        <authorList>
            <person name="Yagi J.M."/>
            <person name="Sims D."/>
            <person name="Brettin T."/>
            <person name="Bruce D."/>
            <person name="Madsen E.L."/>
        </authorList>
    </citation>
    <scope>NUCLEOTIDE SEQUENCE [LARGE SCALE GENOMIC DNA]</scope>
    <source>
        <strain>CJ2</strain>
    </source>
</reference>
<keyword id="KW-1185">Reference proteome</keyword>
<keyword id="KW-0687">Ribonucleoprotein</keyword>
<keyword id="KW-0689">Ribosomal protein</keyword>
<sequence length="133" mass="15188">MRHGHGLRKLNRTSEHRLAMLRNMMNSLLQHEAIKTTLPKAKELRRVVEPMITLAKTPTLANKRLAFDRLRDRDMVVKLFAELGPRYQTRPGGYTRILKMGFRVGDNAPMALVELVDRPDVSEEIKDDAAAAK</sequence>